<comment type="function">
    <text evidence="2">Component of the ubiquinol-cytochrome c reductase complex (complex III or cytochrome b-c1 complex) that is part of the mitochondrial respiratory chain. The b-c1 complex mediates electron transfer from ubiquinol to cytochrome c. Contributes to the generation of a proton gradient across the mitochondrial membrane that is then used for ATP synthesis.</text>
</comment>
<comment type="cofactor">
    <cofactor evidence="2">
        <name>heme b</name>
        <dbReference type="ChEBI" id="CHEBI:60344"/>
    </cofactor>
    <text evidence="2">Binds 2 heme b groups non-covalently.</text>
</comment>
<comment type="subunit">
    <text evidence="2">The cytochrome bc1 complex contains 11 subunits: 3 respiratory subunits (MT-CYB, CYC1 and UQCRFS1), 2 core proteins (UQCRC1 and UQCRC2) and 6 low-molecular weight proteins (UQCRH/QCR6, UQCRB/QCR7, UQCRQ/QCR8, UQCR10/QCR9, UQCR11/QCR10 and a cleavage product of UQCRFS1). This cytochrome bc1 complex then forms a dimer.</text>
</comment>
<comment type="subcellular location">
    <subcellularLocation>
        <location evidence="2">Mitochondrion inner membrane</location>
        <topology evidence="2">Multi-pass membrane protein</topology>
    </subcellularLocation>
</comment>
<comment type="miscellaneous">
    <text evidence="1">Heme 1 (or BL or b562) is low-potential and absorbs at about 562 nm, and heme 2 (or BH or b566) is high-potential and absorbs at about 566 nm.</text>
</comment>
<comment type="similarity">
    <text evidence="3 4">Belongs to the cytochrome b family.</text>
</comment>
<comment type="caution">
    <text evidence="2">The full-length protein contains only eight transmembrane helices, not nine as predicted by bioinformatics tools.</text>
</comment>
<protein>
    <recommendedName>
        <fullName>Cytochrome b</fullName>
    </recommendedName>
    <alternativeName>
        <fullName>Complex III subunit 3</fullName>
    </alternativeName>
    <alternativeName>
        <fullName>Complex III subunit III</fullName>
    </alternativeName>
    <alternativeName>
        <fullName>Cytochrome b-c1 complex subunit 3</fullName>
    </alternativeName>
    <alternativeName>
        <fullName>Ubiquinol-cytochrome-c reductase complex cytochrome b subunit</fullName>
    </alternativeName>
</protein>
<dbReference type="EMBL" id="X82303">
    <property type="protein sequence ID" value="CAA57746.1"/>
    <property type="molecule type" value="Genomic_DNA"/>
</dbReference>
<dbReference type="EMBL" id="AM181030">
    <property type="protein sequence ID" value="CAJ57065.1"/>
    <property type="molecule type" value="Genomic_DNA"/>
</dbReference>
<dbReference type="PIR" id="S58448">
    <property type="entry name" value="S58448"/>
</dbReference>
<dbReference type="RefSeq" id="YP_778876.1">
    <property type="nucleotide sequence ID" value="NC_008429.1"/>
</dbReference>
<dbReference type="SMR" id="Q35457"/>
<dbReference type="GeneID" id="4356246"/>
<dbReference type="CTD" id="4519"/>
<dbReference type="GO" id="GO:0005743">
    <property type="term" value="C:mitochondrial inner membrane"/>
    <property type="evidence" value="ECO:0007669"/>
    <property type="project" value="UniProtKB-SubCell"/>
</dbReference>
<dbReference type="GO" id="GO:0045275">
    <property type="term" value="C:respiratory chain complex III"/>
    <property type="evidence" value="ECO:0007669"/>
    <property type="project" value="InterPro"/>
</dbReference>
<dbReference type="GO" id="GO:0046872">
    <property type="term" value="F:metal ion binding"/>
    <property type="evidence" value="ECO:0007669"/>
    <property type="project" value="UniProtKB-KW"/>
</dbReference>
<dbReference type="GO" id="GO:0008121">
    <property type="term" value="F:ubiquinol-cytochrome-c reductase activity"/>
    <property type="evidence" value="ECO:0007669"/>
    <property type="project" value="InterPro"/>
</dbReference>
<dbReference type="GO" id="GO:0006122">
    <property type="term" value="P:mitochondrial electron transport, ubiquinol to cytochrome c"/>
    <property type="evidence" value="ECO:0007669"/>
    <property type="project" value="TreeGrafter"/>
</dbReference>
<dbReference type="CDD" id="cd00290">
    <property type="entry name" value="cytochrome_b_C"/>
    <property type="match status" value="1"/>
</dbReference>
<dbReference type="CDD" id="cd00284">
    <property type="entry name" value="Cytochrome_b_N"/>
    <property type="match status" value="1"/>
</dbReference>
<dbReference type="FunFam" id="1.20.810.10:FF:000002">
    <property type="entry name" value="Cytochrome b"/>
    <property type="match status" value="1"/>
</dbReference>
<dbReference type="Gene3D" id="1.20.810.10">
    <property type="entry name" value="Cytochrome Bc1 Complex, Chain C"/>
    <property type="match status" value="1"/>
</dbReference>
<dbReference type="InterPro" id="IPR005798">
    <property type="entry name" value="Cyt_b/b6_C"/>
</dbReference>
<dbReference type="InterPro" id="IPR036150">
    <property type="entry name" value="Cyt_b/b6_C_sf"/>
</dbReference>
<dbReference type="InterPro" id="IPR005797">
    <property type="entry name" value="Cyt_b/b6_N"/>
</dbReference>
<dbReference type="InterPro" id="IPR027387">
    <property type="entry name" value="Cytb/b6-like_sf"/>
</dbReference>
<dbReference type="InterPro" id="IPR030689">
    <property type="entry name" value="Cytochrome_b"/>
</dbReference>
<dbReference type="InterPro" id="IPR048260">
    <property type="entry name" value="Cytochrome_b_C_euk/bac"/>
</dbReference>
<dbReference type="InterPro" id="IPR048259">
    <property type="entry name" value="Cytochrome_b_N_euk/bac"/>
</dbReference>
<dbReference type="InterPro" id="IPR016174">
    <property type="entry name" value="Di-haem_cyt_TM"/>
</dbReference>
<dbReference type="PANTHER" id="PTHR19271">
    <property type="entry name" value="CYTOCHROME B"/>
    <property type="match status" value="1"/>
</dbReference>
<dbReference type="PANTHER" id="PTHR19271:SF16">
    <property type="entry name" value="CYTOCHROME B"/>
    <property type="match status" value="1"/>
</dbReference>
<dbReference type="Pfam" id="PF00032">
    <property type="entry name" value="Cytochrom_B_C"/>
    <property type="match status" value="1"/>
</dbReference>
<dbReference type="Pfam" id="PF00033">
    <property type="entry name" value="Cytochrome_B"/>
    <property type="match status" value="1"/>
</dbReference>
<dbReference type="PIRSF" id="PIRSF038885">
    <property type="entry name" value="COB"/>
    <property type="match status" value="1"/>
</dbReference>
<dbReference type="SUPFAM" id="SSF81648">
    <property type="entry name" value="a domain/subunit of cytochrome bc1 complex (Ubiquinol-cytochrome c reductase)"/>
    <property type="match status" value="1"/>
</dbReference>
<dbReference type="SUPFAM" id="SSF81342">
    <property type="entry name" value="Transmembrane di-heme cytochromes"/>
    <property type="match status" value="1"/>
</dbReference>
<dbReference type="PROSITE" id="PS51003">
    <property type="entry name" value="CYTB_CTER"/>
    <property type="match status" value="1"/>
</dbReference>
<dbReference type="PROSITE" id="PS51002">
    <property type="entry name" value="CYTB_NTER"/>
    <property type="match status" value="1"/>
</dbReference>
<gene>
    <name type="primary">MT-CYB</name>
    <name type="synonym">COB</name>
    <name type="synonym">CYTB</name>
    <name type="synonym">MTCYB</name>
</gene>
<proteinExistence type="inferred from homology"/>
<sequence>MTNIRKTHPLMKIINNSFIDLPAPSNISAWWNFGSLLVICLILQILTGLFLAMHYTSDTITAFSSVTHICRDVNYGWIIRYLHANGASMFFICLYMHVGRGLYYGSYTFTETWNIGIILLFTVMATAFMGYVLPWGQMSFWGATVITNLLSAIPYIGTDLVQWIWGGFSVDKATLTRFFAFHFILPFVVLALAAVHLLFLHETGSNNPTGIVSDSDKIPLHPYYTIKDILGALLLILVLMLLVLFSPDLLGDPDNYIPANPLSTPPHIKPEWYFLFAYAILRSIPNKLGGVLALVLSILILAITPLLHTSKQRGMMFRPISQCLFWLLVADLLTLTWIGGQPVEHPYIIIGQLASVLYFMILLVLIPIASIIENNILKW</sequence>
<reference key="1">
    <citation type="journal article" date="1995" name="J. Mol. Evol.">
        <title>A molecular view of pinniped relationships with particular emphasis on the true seals.</title>
        <authorList>
            <person name="Arnason U."/>
            <person name="Bodin K."/>
            <person name="Gullberg A."/>
            <person name="Ledje C."/>
            <person name="Mouchaty S."/>
        </authorList>
    </citation>
    <scope>NUCLEOTIDE SEQUENCE [GENOMIC DNA]</scope>
</reference>
<reference key="2">
    <citation type="journal article" date="2006" name="Mol. Phylogenet. Evol.">
        <title>Pinniped phylogeny and a new hypothesis for their origin and dispersal.</title>
        <authorList>
            <person name="Arnason U."/>
            <person name="Gullberg A."/>
            <person name="Janke A."/>
            <person name="Kullberg M."/>
            <person name="Lehman N."/>
            <person name="Petrov E.A."/>
            <person name="Vainola R."/>
        </authorList>
    </citation>
    <scope>NUCLEOTIDE SEQUENCE [GENOMIC DNA]</scope>
</reference>
<geneLocation type="mitochondrion"/>
<evidence type="ECO:0000250" key="1"/>
<evidence type="ECO:0000250" key="2">
    <source>
        <dbReference type="UniProtKB" id="P00157"/>
    </source>
</evidence>
<evidence type="ECO:0000255" key="3">
    <source>
        <dbReference type="PROSITE-ProRule" id="PRU00967"/>
    </source>
</evidence>
<evidence type="ECO:0000255" key="4">
    <source>
        <dbReference type="PROSITE-ProRule" id="PRU00968"/>
    </source>
</evidence>
<name>CYB_PAGGO</name>
<organism>
    <name type="scientific">Pagophilus groenlandicus</name>
    <name type="common">Harp seal</name>
    <name type="synonym">Phoca groenlandica</name>
    <dbReference type="NCBI Taxonomy" id="39089"/>
    <lineage>
        <taxon>Eukaryota</taxon>
        <taxon>Metazoa</taxon>
        <taxon>Chordata</taxon>
        <taxon>Craniata</taxon>
        <taxon>Vertebrata</taxon>
        <taxon>Euteleostomi</taxon>
        <taxon>Mammalia</taxon>
        <taxon>Eutheria</taxon>
        <taxon>Laurasiatheria</taxon>
        <taxon>Carnivora</taxon>
        <taxon>Caniformia</taxon>
        <taxon>Pinnipedia</taxon>
        <taxon>Phocidae</taxon>
        <taxon>Phocinae</taxon>
        <taxon>Phoca</taxon>
    </lineage>
</organism>
<feature type="chain" id="PRO_0000061388" description="Cytochrome b">
    <location>
        <begin position="1"/>
        <end position="379"/>
    </location>
</feature>
<feature type="transmembrane region" description="Helical" evidence="2">
    <location>
        <begin position="33"/>
        <end position="53"/>
    </location>
</feature>
<feature type="transmembrane region" description="Helical" evidence="2">
    <location>
        <begin position="77"/>
        <end position="98"/>
    </location>
</feature>
<feature type="transmembrane region" description="Helical" evidence="2">
    <location>
        <begin position="113"/>
        <end position="133"/>
    </location>
</feature>
<feature type="transmembrane region" description="Helical" evidence="2">
    <location>
        <begin position="178"/>
        <end position="198"/>
    </location>
</feature>
<feature type="transmembrane region" description="Helical" evidence="2">
    <location>
        <begin position="226"/>
        <end position="246"/>
    </location>
</feature>
<feature type="transmembrane region" description="Helical" evidence="2">
    <location>
        <begin position="288"/>
        <end position="308"/>
    </location>
</feature>
<feature type="transmembrane region" description="Helical" evidence="2">
    <location>
        <begin position="320"/>
        <end position="340"/>
    </location>
</feature>
<feature type="transmembrane region" description="Helical" evidence="2">
    <location>
        <begin position="347"/>
        <end position="367"/>
    </location>
</feature>
<feature type="binding site" description="axial binding residue" evidence="2">
    <location>
        <position position="83"/>
    </location>
    <ligand>
        <name>heme b</name>
        <dbReference type="ChEBI" id="CHEBI:60344"/>
        <label>b562</label>
    </ligand>
    <ligandPart>
        <name>Fe</name>
        <dbReference type="ChEBI" id="CHEBI:18248"/>
    </ligandPart>
</feature>
<feature type="binding site" description="axial binding residue" evidence="2">
    <location>
        <position position="97"/>
    </location>
    <ligand>
        <name>heme b</name>
        <dbReference type="ChEBI" id="CHEBI:60344"/>
        <label>b566</label>
    </ligand>
    <ligandPart>
        <name>Fe</name>
        <dbReference type="ChEBI" id="CHEBI:18248"/>
    </ligandPart>
</feature>
<feature type="binding site" description="axial binding residue" evidence="2">
    <location>
        <position position="182"/>
    </location>
    <ligand>
        <name>heme b</name>
        <dbReference type="ChEBI" id="CHEBI:60344"/>
        <label>b562</label>
    </ligand>
    <ligandPart>
        <name>Fe</name>
        <dbReference type="ChEBI" id="CHEBI:18248"/>
    </ligandPart>
</feature>
<feature type="binding site" description="axial binding residue" evidence="2">
    <location>
        <position position="196"/>
    </location>
    <ligand>
        <name>heme b</name>
        <dbReference type="ChEBI" id="CHEBI:60344"/>
        <label>b566</label>
    </ligand>
    <ligandPart>
        <name>Fe</name>
        <dbReference type="ChEBI" id="CHEBI:18248"/>
    </ligandPart>
</feature>
<feature type="binding site" evidence="2">
    <location>
        <position position="201"/>
    </location>
    <ligand>
        <name>a ubiquinone</name>
        <dbReference type="ChEBI" id="CHEBI:16389"/>
    </ligand>
</feature>
<keyword id="KW-0249">Electron transport</keyword>
<keyword id="KW-0349">Heme</keyword>
<keyword id="KW-0408">Iron</keyword>
<keyword id="KW-0472">Membrane</keyword>
<keyword id="KW-0479">Metal-binding</keyword>
<keyword id="KW-0496">Mitochondrion</keyword>
<keyword id="KW-0999">Mitochondrion inner membrane</keyword>
<keyword id="KW-0679">Respiratory chain</keyword>
<keyword id="KW-0812">Transmembrane</keyword>
<keyword id="KW-1133">Transmembrane helix</keyword>
<keyword id="KW-0813">Transport</keyword>
<keyword id="KW-0830">Ubiquinone</keyword>
<accession>Q35457</accession>
<accession>Q08H33</accession>